<dbReference type="EC" id="5.3.1.1" evidence="1"/>
<dbReference type="EMBL" id="AE016823">
    <property type="protein sequence ID" value="AAS70665.1"/>
    <property type="molecule type" value="Genomic_DNA"/>
</dbReference>
<dbReference type="RefSeq" id="WP_001232578.1">
    <property type="nucleotide sequence ID" value="NC_005823.1"/>
</dbReference>
<dbReference type="SMR" id="Q72QL9"/>
<dbReference type="GeneID" id="61141978"/>
<dbReference type="KEGG" id="lic:LIC_12094"/>
<dbReference type="HOGENOM" id="CLU_024251_2_3_12"/>
<dbReference type="UniPathway" id="UPA00109">
    <property type="reaction ID" value="UER00189"/>
</dbReference>
<dbReference type="UniPathway" id="UPA00138"/>
<dbReference type="Proteomes" id="UP000007037">
    <property type="component" value="Chromosome I"/>
</dbReference>
<dbReference type="GO" id="GO:0005829">
    <property type="term" value="C:cytosol"/>
    <property type="evidence" value="ECO:0007669"/>
    <property type="project" value="TreeGrafter"/>
</dbReference>
<dbReference type="GO" id="GO:0004807">
    <property type="term" value="F:triose-phosphate isomerase activity"/>
    <property type="evidence" value="ECO:0007669"/>
    <property type="project" value="UniProtKB-UniRule"/>
</dbReference>
<dbReference type="GO" id="GO:0006094">
    <property type="term" value="P:gluconeogenesis"/>
    <property type="evidence" value="ECO:0007669"/>
    <property type="project" value="UniProtKB-UniRule"/>
</dbReference>
<dbReference type="GO" id="GO:0046166">
    <property type="term" value="P:glyceraldehyde-3-phosphate biosynthetic process"/>
    <property type="evidence" value="ECO:0007669"/>
    <property type="project" value="TreeGrafter"/>
</dbReference>
<dbReference type="GO" id="GO:0019563">
    <property type="term" value="P:glycerol catabolic process"/>
    <property type="evidence" value="ECO:0007669"/>
    <property type="project" value="TreeGrafter"/>
</dbReference>
<dbReference type="GO" id="GO:0006096">
    <property type="term" value="P:glycolytic process"/>
    <property type="evidence" value="ECO:0007669"/>
    <property type="project" value="UniProtKB-UniRule"/>
</dbReference>
<dbReference type="CDD" id="cd00311">
    <property type="entry name" value="TIM"/>
    <property type="match status" value="1"/>
</dbReference>
<dbReference type="FunFam" id="3.20.20.70:FF:000016">
    <property type="entry name" value="Triosephosphate isomerase"/>
    <property type="match status" value="1"/>
</dbReference>
<dbReference type="Gene3D" id="3.20.20.70">
    <property type="entry name" value="Aldolase class I"/>
    <property type="match status" value="1"/>
</dbReference>
<dbReference type="HAMAP" id="MF_00147_B">
    <property type="entry name" value="TIM_B"/>
    <property type="match status" value="1"/>
</dbReference>
<dbReference type="InterPro" id="IPR013785">
    <property type="entry name" value="Aldolase_TIM"/>
</dbReference>
<dbReference type="InterPro" id="IPR035990">
    <property type="entry name" value="TIM_sf"/>
</dbReference>
<dbReference type="InterPro" id="IPR022896">
    <property type="entry name" value="TrioseP_Isoase_bac/euk"/>
</dbReference>
<dbReference type="InterPro" id="IPR000652">
    <property type="entry name" value="Triosephosphate_isomerase"/>
</dbReference>
<dbReference type="InterPro" id="IPR020861">
    <property type="entry name" value="Triosephosphate_isomerase_AS"/>
</dbReference>
<dbReference type="NCBIfam" id="TIGR00419">
    <property type="entry name" value="tim"/>
    <property type="match status" value="1"/>
</dbReference>
<dbReference type="PANTHER" id="PTHR21139">
    <property type="entry name" value="TRIOSEPHOSPHATE ISOMERASE"/>
    <property type="match status" value="1"/>
</dbReference>
<dbReference type="PANTHER" id="PTHR21139:SF42">
    <property type="entry name" value="TRIOSEPHOSPHATE ISOMERASE"/>
    <property type="match status" value="1"/>
</dbReference>
<dbReference type="Pfam" id="PF00121">
    <property type="entry name" value="TIM"/>
    <property type="match status" value="1"/>
</dbReference>
<dbReference type="SUPFAM" id="SSF51351">
    <property type="entry name" value="Triosephosphate isomerase (TIM)"/>
    <property type="match status" value="1"/>
</dbReference>
<dbReference type="PROSITE" id="PS00171">
    <property type="entry name" value="TIM_1"/>
    <property type="match status" value="1"/>
</dbReference>
<dbReference type="PROSITE" id="PS51440">
    <property type="entry name" value="TIM_2"/>
    <property type="match status" value="1"/>
</dbReference>
<reference key="1">
    <citation type="journal article" date="2004" name="J. Bacteriol.">
        <title>Comparative genomics of two Leptospira interrogans serovars reveals novel insights into physiology and pathogenesis.</title>
        <authorList>
            <person name="Nascimento A.L.T.O."/>
            <person name="Ko A.I."/>
            <person name="Martins E.A.L."/>
            <person name="Monteiro-Vitorello C.B."/>
            <person name="Ho P.L."/>
            <person name="Haake D.A."/>
            <person name="Verjovski-Almeida S."/>
            <person name="Hartskeerl R.A."/>
            <person name="Marques M.V."/>
            <person name="Oliveira M.C."/>
            <person name="Menck C.F.M."/>
            <person name="Leite L.C.C."/>
            <person name="Carrer H."/>
            <person name="Coutinho L.L."/>
            <person name="Degrave W.M."/>
            <person name="Dellagostin O.A."/>
            <person name="El-Dorry H."/>
            <person name="Ferro E.S."/>
            <person name="Ferro M.I.T."/>
            <person name="Furlan L.R."/>
            <person name="Gamberini M."/>
            <person name="Giglioti E.A."/>
            <person name="Goes-Neto A."/>
            <person name="Goldman G.H."/>
            <person name="Goldman M.H.S."/>
            <person name="Harakava R."/>
            <person name="Jeronimo S.M.B."/>
            <person name="Junqueira-de-Azevedo I.L.M."/>
            <person name="Kimura E.T."/>
            <person name="Kuramae E.E."/>
            <person name="Lemos E.G.M."/>
            <person name="Lemos M.V.F."/>
            <person name="Marino C.L."/>
            <person name="Nunes L.R."/>
            <person name="de Oliveira R.C."/>
            <person name="Pereira G.G."/>
            <person name="Reis M.S."/>
            <person name="Schriefer A."/>
            <person name="Siqueira W.J."/>
            <person name="Sommer P."/>
            <person name="Tsai S.M."/>
            <person name="Simpson A.J.G."/>
            <person name="Ferro J.A."/>
            <person name="Camargo L.E.A."/>
            <person name="Kitajima J.P."/>
            <person name="Setubal J.C."/>
            <person name="Van Sluys M.A."/>
        </authorList>
    </citation>
    <scope>NUCLEOTIDE SEQUENCE [LARGE SCALE GENOMIC DNA]</scope>
    <source>
        <strain>Fiocruz L1-130</strain>
    </source>
</reference>
<proteinExistence type="inferred from homology"/>
<sequence>MRKTIIAGNWKMNLSLKEAVFLAHSIREKIPSISKDKVSMVFPSTLHLENVSKILEGSSVIVGAQNCYHSGLAAFTGETSPDQLKEIGVKVVMVGHSERRQFLGESNFFCNDKIRFLLKNEFTVLYCVGETLSERESGKTLEVLSSQIREGLKGIDSVFFSNLILAYEPVWAIGTGKVATPSQAQEVHSFIRKEISGLFVGASSISESISILYGGSVKPDNIQDLLKEKDIDGGLVGGASQKISSFAGLF</sequence>
<name>TPIS_LEPIC</name>
<protein>
    <recommendedName>
        <fullName evidence="1">Triosephosphate isomerase</fullName>
        <shortName evidence="1">TIM</shortName>
        <shortName evidence="1">TPI</shortName>
        <ecNumber evidence="1">5.3.1.1</ecNumber>
    </recommendedName>
    <alternativeName>
        <fullName evidence="1">Triose-phosphate isomerase</fullName>
    </alternativeName>
</protein>
<accession>Q72QL9</accession>
<evidence type="ECO:0000255" key="1">
    <source>
        <dbReference type="HAMAP-Rule" id="MF_00147"/>
    </source>
</evidence>
<keyword id="KW-0963">Cytoplasm</keyword>
<keyword id="KW-0312">Gluconeogenesis</keyword>
<keyword id="KW-0324">Glycolysis</keyword>
<keyword id="KW-0413">Isomerase</keyword>
<comment type="function">
    <text evidence="1">Involved in the gluconeogenesis. Catalyzes stereospecifically the conversion of dihydroxyacetone phosphate (DHAP) to D-glyceraldehyde-3-phosphate (G3P).</text>
</comment>
<comment type="catalytic activity">
    <reaction evidence="1">
        <text>D-glyceraldehyde 3-phosphate = dihydroxyacetone phosphate</text>
        <dbReference type="Rhea" id="RHEA:18585"/>
        <dbReference type="ChEBI" id="CHEBI:57642"/>
        <dbReference type="ChEBI" id="CHEBI:59776"/>
        <dbReference type="EC" id="5.3.1.1"/>
    </reaction>
</comment>
<comment type="pathway">
    <text evidence="1">Carbohydrate biosynthesis; gluconeogenesis.</text>
</comment>
<comment type="pathway">
    <text evidence="1">Carbohydrate degradation; glycolysis; D-glyceraldehyde 3-phosphate from glycerone phosphate: step 1/1.</text>
</comment>
<comment type="subunit">
    <text evidence="1">Homodimer.</text>
</comment>
<comment type="subcellular location">
    <subcellularLocation>
        <location evidence="1">Cytoplasm</location>
    </subcellularLocation>
</comment>
<comment type="similarity">
    <text evidence="1">Belongs to the triosephosphate isomerase family.</text>
</comment>
<organism>
    <name type="scientific">Leptospira interrogans serogroup Icterohaemorrhagiae serovar copenhageni (strain Fiocruz L1-130)</name>
    <dbReference type="NCBI Taxonomy" id="267671"/>
    <lineage>
        <taxon>Bacteria</taxon>
        <taxon>Pseudomonadati</taxon>
        <taxon>Spirochaetota</taxon>
        <taxon>Spirochaetia</taxon>
        <taxon>Leptospirales</taxon>
        <taxon>Leptospiraceae</taxon>
        <taxon>Leptospira</taxon>
    </lineage>
</organism>
<gene>
    <name evidence="1" type="primary">tpiA</name>
    <name type="ordered locus">LIC_12094</name>
</gene>
<feature type="chain" id="PRO_0000090236" description="Triosephosphate isomerase">
    <location>
        <begin position="1"/>
        <end position="250"/>
    </location>
</feature>
<feature type="active site" description="Electrophile" evidence="1">
    <location>
        <position position="96"/>
    </location>
</feature>
<feature type="active site" description="Proton acceptor" evidence="1">
    <location>
        <position position="168"/>
    </location>
</feature>
<feature type="binding site" evidence="1">
    <location>
        <begin position="9"/>
        <end position="11"/>
    </location>
    <ligand>
        <name>substrate</name>
    </ligand>
</feature>
<feature type="binding site" evidence="1">
    <location>
        <position position="174"/>
    </location>
    <ligand>
        <name>substrate</name>
    </ligand>
</feature>
<feature type="binding site" evidence="1">
    <location>
        <position position="216"/>
    </location>
    <ligand>
        <name>substrate</name>
    </ligand>
</feature>
<feature type="binding site" evidence="1">
    <location>
        <begin position="237"/>
        <end position="238"/>
    </location>
    <ligand>
        <name>substrate</name>
    </ligand>
</feature>